<comment type="function">
    <text evidence="1">General (non sugar-specific) component of the phosphoenolpyruvate-dependent sugar phosphotransferase system (sugar PTS). This major carbohydrate active-transport system catalyzes the phosphorylation of incoming sugar substrates concomitantly with their translocation across the cell membrane. The phosphoryl group from phosphoenolpyruvate (PEP) is transferred to the phosphoryl carrier protein HPr by enzyme I. Phospho-HPr then transfers it to the PTS EIIA domain.</text>
</comment>
<comment type="subcellular location">
    <subcellularLocation>
        <location>Cytoplasm</location>
    </subcellularLocation>
</comment>
<comment type="similarity">
    <text evidence="3">Belongs to the HPr family.</text>
</comment>
<dbReference type="EMBL" id="M69036">
    <property type="protein sequence ID" value="AAA21977.1"/>
    <property type="molecule type" value="Genomic_DNA"/>
</dbReference>
<dbReference type="EMBL" id="AM260479">
    <property type="protein sequence ID" value="CAJ91476.1"/>
    <property type="molecule type" value="Genomic_DNA"/>
</dbReference>
<dbReference type="PIR" id="A38120">
    <property type="entry name" value="A38120"/>
</dbReference>
<dbReference type="RefSeq" id="WP_010814838.1">
    <property type="nucleotide sequence ID" value="NZ_CP039287.1"/>
</dbReference>
<dbReference type="SMR" id="P23537"/>
<dbReference type="STRING" id="381666.H16_A0325"/>
<dbReference type="KEGG" id="reh:H16_A0325"/>
<dbReference type="eggNOG" id="COG1925">
    <property type="taxonomic scope" value="Bacteria"/>
</dbReference>
<dbReference type="HOGENOM" id="CLU_136230_1_1_4"/>
<dbReference type="OrthoDB" id="9798965at2"/>
<dbReference type="Proteomes" id="UP000008210">
    <property type="component" value="Chromosome 1"/>
</dbReference>
<dbReference type="GO" id="GO:0005737">
    <property type="term" value="C:cytoplasm"/>
    <property type="evidence" value="ECO:0007669"/>
    <property type="project" value="UniProtKB-SubCell"/>
</dbReference>
<dbReference type="GO" id="GO:0009401">
    <property type="term" value="P:phosphoenolpyruvate-dependent sugar phosphotransferase system"/>
    <property type="evidence" value="ECO:0007669"/>
    <property type="project" value="UniProtKB-KW"/>
</dbReference>
<dbReference type="CDD" id="cd00367">
    <property type="entry name" value="PTS-HPr_like"/>
    <property type="match status" value="1"/>
</dbReference>
<dbReference type="Gene3D" id="3.30.1340.10">
    <property type="entry name" value="HPr-like"/>
    <property type="match status" value="1"/>
</dbReference>
<dbReference type="InterPro" id="IPR050399">
    <property type="entry name" value="HPr"/>
</dbReference>
<dbReference type="InterPro" id="IPR000032">
    <property type="entry name" value="HPr-like"/>
</dbReference>
<dbReference type="InterPro" id="IPR035895">
    <property type="entry name" value="HPr-like_sf"/>
</dbReference>
<dbReference type="InterPro" id="IPR001020">
    <property type="entry name" value="PTS_HPr_His_P_site"/>
</dbReference>
<dbReference type="InterPro" id="IPR002114">
    <property type="entry name" value="PTS_HPr_Ser_P_site"/>
</dbReference>
<dbReference type="NCBIfam" id="TIGR01003">
    <property type="entry name" value="PTS_HPr_family"/>
    <property type="match status" value="1"/>
</dbReference>
<dbReference type="PANTHER" id="PTHR33705">
    <property type="entry name" value="PHOSPHOCARRIER PROTEIN HPR"/>
    <property type="match status" value="1"/>
</dbReference>
<dbReference type="PANTHER" id="PTHR33705:SF2">
    <property type="entry name" value="PHOSPHOCARRIER PROTEIN NPR"/>
    <property type="match status" value="1"/>
</dbReference>
<dbReference type="Pfam" id="PF00381">
    <property type="entry name" value="PTS-HPr"/>
    <property type="match status" value="1"/>
</dbReference>
<dbReference type="PRINTS" id="PR00107">
    <property type="entry name" value="PHOSPHOCPHPR"/>
</dbReference>
<dbReference type="SUPFAM" id="SSF55594">
    <property type="entry name" value="HPr-like"/>
    <property type="match status" value="1"/>
</dbReference>
<dbReference type="PROSITE" id="PS51350">
    <property type="entry name" value="PTS_HPR_DOM"/>
    <property type="match status" value="1"/>
</dbReference>
<dbReference type="PROSITE" id="PS00369">
    <property type="entry name" value="PTS_HPR_HIS"/>
    <property type="match status" value="1"/>
</dbReference>
<dbReference type="PROSITE" id="PS00589">
    <property type="entry name" value="PTS_HPR_SER"/>
    <property type="match status" value="1"/>
</dbReference>
<accession>P23537</accession>
<accession>Q0KEU5</accession>
<sequence>MLQRDTTIINKLGLHARASAKLTQLAGNFVSQVKMSRNGRQVDAKSIMGVMMLAAGIGSTVTLETDGPDEQEAMDALLALIANRFGEGE</sequence>
<feature type="chain" id="PRO_0000107837" description="Phosphocarrier protein HPr">
    <location>
        <begin position="1"/>
        <end position="89"/>
    </location>
</feature>
<feature type="domain" description="HPr" evidence="2">
    <location>
        <begin position="1"/>
        <end position="88"/>
    </location>
</feature>
<feature type="active site" description="Pros-phosphohistidine intermediate" evidence="2">
    <location>
        <position position="15"/>
    </location>
</feature>
<organism>
    <name type="scientific">Cupriavidus necator (strain ATCC 17699 / DSM 428 / KCTC 22496 / NCIMB 10442 / H16 / Stanier 337)</name>
    <name type="common">Ralstonia eutropha</name>
    <dbReference type="NCBI Taxonomy" id="381666"/>
    <lineage>
        <taxon>Bacteria</taxon>
        <taxon>Pseudomonadati</taxon>
        <taxon>Pseudomonadota</taxon>
        <taxon>Betaproteobacteria</taxon>
        <taxon>Burkholderiales</taxon>
        <taxon>Burkholderiaceae</taxon>
        <taxon>Cupriavidus</taxon>
    </lineage>
</organism>
<gene>
    <name type="primary">phbH</name>
    <name type="synonym">ptsH</name>
    <name type="ordered locus">H16_A0325</name>
</gene>
<name>PTHP_CUPNH</name>
<reference key="1">
    <citation type="journal article" date="1991" name="J. Bacteriol.">
        <title>Identification and characterization of two Alcaligenes eutrophus gene loci relevant to the poly(beta-hydroxybutyric acid)-leaky phenotype which exhibit homology to ptsH and ptsI of Escherichia coli.</title>
        <authorList>
            <person name="Pries A."/>
            <person name="Priefert H."/>
            <person name="Krueger N."/>
            <person name="Steinbuechel A."/>
        </authorList>
    </citation>
    <scope>NUCLEOTIDE SEQUENCE [GENOMIC DNA]</scope>
</reference>
<reference key="2">
    <citation type="journal article" date="2006" name="Nat. Biotechnol.">
        <title>Genome sequence of the bioplastic-producing 'Knallgas' bacterium Ralstonia eutropha H16.</title>
        <authorList>
            <person name="Pohlmann A."/>
            <person name="Fricke W.F."/>
            <person name="Reinecke F."/>
            <person name="Kusian B."/>
            <person name="Liesegang H."/>
            <person name="Cramm R."/>
            <person name="Eitinger T."/>
            <person name="Ewering C."/>
            <person name="Poetter M."/>
            <person name="Schwartz E."/>
            <person name="Strittmatter A."/>
            <person name="Voss I."/>
            <person name="Gottschalk G."/>
            <person name="Steinbuechel A."/>
            <person name="Friedrich B."/>
            <person name="Bowien B."/>
        </authorList>
    </citation>
    <scope>NUCLEOTIDE SEQUENCE [LARGE SCALE GENOMIC DNA]</scope>
    <source>
        <strain>ATCC 17699 / DSM 428 / KCTC 22496 / NCIMB 10442 / H16 / Stanier 337</strain>
    </source>
</reference>
<proteinExistence type="inferred from homology"/>
<protein>
    <recommendedName>
        <fullName>Phosphocarrier protein HPr</fullName>
    </recommendedName>
    <alternativeName>
        <fullName>Histidine-containing protein</fullName>
        <shortName>Protein H</shortName>
    </alternativeName>
</protein>
<keyword id="KW-0963">Cytoplasm</keyword>
<keyword id="KW-0598">Phosphotransferase system</keyword>
<keyword id="KW-1185">Reference proteome</keyword>
<keyword id="KW-0762">Sugar transport</keyword>
<keyword id="KW-0813">Transport</keyword>
<evidence type="ECO:0000250" key="1"/>
<evidence type="ECO:0000255" key="2">
    <source>
        <dbReference type="PROSITE-ProRule" id="PRU00681"/>
    </source>
</evidence>
<evidence type="ECO:0000305" key="3"/>